<feature type="signal peptide" evidence="3">
    <location>
        <begin position="1"/>
        <end position="30"/>
    </location>
</feature>
<feature type="chain" id="PRO_0000452120" description="Perivitellin-2 31 kDa subunit" evidence="10 11">
    <location>
        <begin position="31"/>
        <end position="286"/>
    </location>
</feature>
<feature type="glycosylation site" description="N-linked (GlcNAc...) asparagine" evidence="3">
    <location>
        <position position="101"/>
    </location>
</feature>
<feature type="disulfide bond" description="Interchain" evidence="5">
    <location>
        <position position="161"/>
    </location>
</feature>
<dbReference type="SMR" id="P0DQP0"/>
<dbReference type="TCDB" id="1.C.39.2.9">
    <property type="family name" value="the membrane attack complex/perforin (macpf) family"/>
</dbReference>
<dbReference type="GO" id="GO:0005576">
    <property type="term" value="C:extracellular region"/>
    <property type="evidence" value="ECO:0007669"/>
    <property type="project" value="UniProtKB-SubCell"/>
</dbReference>
<dbReference type="GO" id="GO:0016020">
    <property type="term" value="C:membrane"/>
    <property type="evidence" value="ECO:0007669"/>
    <property type="project" value="UniProtKB-KW"/>
</dbReference>
<dbReference type="GO" id="GO:0044218">
    <property type="term" value="C:other organism cell membrane"/>
    <property type="evidence" value="ECO:0007669"/>
    <property type="project" value="UniProtKB-KW"/>
</dbReference>
<dbReference type="GO" id="GO:0030246">
    <property type="term" value="F:carbohydrate binding"/>
    <property type="evidence" value="ECO:0007669"/>
    <property type="project" value="UniProtKB-KW"/>
</dbReference>
<dbReference type="GO" id="GO:0045735">
    <property type="term" value="F:nutrient reservoir activity"/>
    <property type="evidence" value="ECO:0007669"/>
    <property type="project" value="UniProtKB-KW"/>
</dbReference>
<dbReference type="GO" id="GO:0090729">
    <property type="term" value="F:toxin activity"/>
    <property type="evidence" value="ECO:0007669"/>
    <property type="project" value="UniProtKB-KW"/>
</dbReference>
<dbReference type="InterPro" id="IPR006624">
    <property type="entry name" value="Beta-propeller_rpt_TECPR"/>
</dbReference>
<dbReference type="InterPro" id="IPR051513">
    <property type="entry name" value="Tectonin_beta-propeller"/>
</dbReference>
<dbReference type="PANTHER" id="PTHR23250">
    <property type="entry name" value="DYSFERLIN-RELATED"/>
    <property type="match status" value="1"/>
</dbReference>
<dbReference type="PANTHER" id="PTHR23250:SF3">
    <property type="entry name" value="FISH-EGG LECTIN-LIKE ISOFORM X1-RELATED"/>
    <property type="match status" value="1"/>
</dbReference>
<dbReference type="Pfam" id="PF19193">
    <property type="entry name" value="Tectonin"/>
    <property type="match status" value="2"/>
</dbReference>
<dbReference type="SMART" id="SM00706">
    <property type="entry name" value="TECPR"/>
    <property type="match status" value="3"/>
</dbReference>
<accession>P0DQP0</accession>
<proteinExistence type="evidence at protein level"/>
<keyword id="KW-1015">Disulfide bond</keyword>
<keyword id="KW-0260">Enterotoxin</keyword>
<keyword id="KW-0325">Glycoprotein</keyword>
<keyword id="KW-0348">Hemagglutinin</keyword>
<keyword id="KW-0430">Lectin</keyword>
<keyword id="KW-0449">Lipoprotein</keyword>
<keyword id="KW-0472">Membrane</keyword>
<keyword id="KW-0528">Neurotoxin</keyword>
<keyword id="KW-0964">Secreted</keyword>
<keyword id="KW-0732">Signal</keyword>
<keyword id="KW-0758">Storage protein</keyword>
<keyword id="KW-1052">Target cell membrane</keyword>
<keyword id="KW-1053">Target membrane</keyword>
<keyword id="KW-0800">Toxin</keyword>
<protein>
    <recommendedName>
        <fullName evidence="6">Perivitellin-2 31 kDa subunit</fullName>
        <shortName evidence="9">PmPV2 31 kDa subunit</shortName>
        <shortName evidence="7 8">PmPV2-31</shortName>
    </recommendedName>
    <alternativeName>
        <fullName evidence="8">PV2 tachylectin 'B' delivery subunit</fullName>
    </alternativeName>
    <alternativeName>
        <fullName evidence="7">Pma_3499_0.54</fullName>
    </alternativeName>
    <alternativeName>
        <fullName evidence="8">Pore forming toxin</fullName>
        <shortName evidence="8">PFT</shortName>
    </alternativeName>
</protein>
<comment type="function">
    <text evidence="1 4 5">The egg defensive protein perivitellin-2 is a pore-forming two-subunit glycoprotein that affects both the nervous and digestive systems of mammals (PubMed:32231667, PubMed:32446810). In addition, it is a source of both structural and energetic molecules during embryonic development (By similarity). The tachylectin subunit (31 kDa) binds target membranes while the MACPF subunit (67 kDa) disrupts lipid bilayers forming large pores (inner diameter of about 5.6 nm) altering the plasma membrance conductance (PubMed:32446810). Both in vivo and in vitro, the protein shows wide pH range stability and is resistant to enzymatic proteolysis from gastrointestinal environments (PubMed:32231667). It is cytotoxic to both epithelial and immune cells from the digestive system of mammals (PubMed:32231667). It induces enterocyte death by a lytic mechanism and disrupts enterocyte monolayers in a dose-dependent manner (PubMed:32231667). After oral administration to mice, it binds enterocytes and induces large dose-dependent morphological changes on their small intestine mucosa, reducing the absorptive surface (PubMed:32231667). Additionally, it is detected in the Peyer's patches where it activates lymphoid follicles and triggers apoptosis (PubMed:32231667). The toxin can also traverse the intestinal barrier and induce oral adaptive immunity with evidence of circulating antibody response (PubMed:32231667). The toxin also shows hemagglutination properties thanks to the tachylectin subunit, but has no hemolytic activity (PubMed:32446810). In addition to enterotoxin activity, the toxin also acts as a neurotoxin, since an intraperitoneal injection can induce paralysis of the mice rear limbs, followed by death (PubMed:32446810).</text>
</comment>
<comment type="subunit">
    <text evidence="5">Perivitellin-2 is a dimer of heterodimers held together head-to-tail by non-covalent forces. The heterodimer is composed of the tachylectin subunit (31 kDa) and the MACPF subunit (67 kDa) that are disulfide-linked.</text>
</comment>
<comment type="subcellular location">
    <subcellularLocation>
        <location evidence="9">Secreted</location>
    </subcellularLocation>
    <subcellularLocation>
        <location evidence="4 5">Target cell membrane</location>
    </subcellularLocation>
</comment>
<comment type="tissue specificity">
    <text evidence="10">Produced by albumen secretory cells. Found in developing eggs.</text>
</comment>
<comment type="PTM">
    <text evidence="2">PV2 is a very high density lipoprotein (VHDL). It contains 3.75% of lipids. The major lipid classes are free sterols and phospholipids and also have significant quantities of energy-providing triacylglycerides and free fatty acids.</text>
</comment>
<comment type="toxic dose">
    <text evidence="5">LD(50) is 250 ug/kg by intraperitoneal injection into mice.</text>
</comment>
<comment type="similarity">
    <text evidence="9">Belongs to the tectonin family.</text>
</comment>
<organism>
    <name type="scientific">Pomacea maculata</name>
    <name type="common">Giant applesnail</name>
    <dbReference type="NCBI Taxonomy" id="1245466"/>
    <lineage>
        <taxon>Eukaryota</taxon>
        <taxon>Metazoa</taxon>
        <taxon>Spiralia</taxon>
        <taxon>Lophotrochozoa</taxon>
        <taxon>Mollusca</taxon>
        <taxon>Gastropoda</taxon>
        <taxon>Caenogastropoda</taxon>
        <taxon>Architaenioglossa</taxon>
        <taxon>Ampullarioidea</taxon>
        <taxon>Ampullariidae</taxon>
        <taxon>Pomacea</taxon>
    </lineage>
</organism>
<reference key="1">
    <citation type="journal article" date="2018" name="BMC Genomics">
        <title>AmpuBase: a transcriptome database for eight species of apple snails (Gastropoda: Ampullariidae).</title>
        <authorList>
            <person name="Ip J.C.H."/>
            <person name="Mu H."/>
            <person name="Chen Q."/>
            <person name="Sun J."/>
            <person name="Ituarte S."/>
            <person name="Heras H."/>
            <person name="Van Bocxlaer B."/>
            <person name="Ganmanee M."/>
            <person name="Huang X."/>
            <person name="Qiu J.W."/>
        </authorList>
    </citation>
    <scope>NUCLEOTIDE SEQUENCE [MRNA]</scope>
    <source>
        <tissue>Albumen gland</tissue>
    </source>
</reference>
<reference key="2">
    <citation type="journal article" date="2019" name="Mol. Biol. Evol.">
        <title>Signatures of divergence, invasiveness, and terrestrialization revealed by four apple snail genomes.</title>
        <authorList>
            <person name="Sun J."/>
            <person name="Mu H."/>
            <person name="Ip J.C.H."/>
            <person name="Li R."/>
            <person name="Xu T."/>
            <person name="Accorsi A."/>
            <person name="Sanchez Alvarado A."/>
            <person name="Ross E."/>
            <person name="Lan Y."/>
            <person name="Sun Y."/>
            <person name="Castro-Vazquez A."/>
            <person name="Vega I.A."/>
            <person name="Heras H."/>
            <person name="Ituarte S."/>
            <person name="Van Bocxlaer B."/>
            <person name="Hayes K.A."/>
            <person name="Cowie R.H."/>
            <person name="Zhao Z."/>
            <person name="Zhang Y."/>
            <person name="Qian P.Y."/>
            <person name="Qiu J.W."/>
        </authorList>
    </citation>
    <scope>NUCLEOTIDE SEQUENCE [LARGE SCALE GENOMIC DNA]</scope>
</reference>
<reference key="3">
    <citation type="journal article" date="2020" name="Front. Immunol.">
        <title>Novel role for animal innate immune molecules: enterotoxic activity of a snail egg MACPF-toxin.</title>
        <authorList>
            <person name="Giglio M.L."/>
            <person name="Ituarte S."/>
            <person name="Ibanez A.E."/>
            <person name="Dreon M.S."/>
            <person name="Prieto E."/>
            <person name="Fernandez P.E."/>
            <person name="Heras H."/>
        </authorList>
    </citation>
    <scope>FUNCTION</scope>
    <scope>SUBCELLULAR LOCATION</scope>
</reference>
<reference key="4">
    <citation type="journal article" date="2020" name="J. Struct. Biol.">
        <title>Exaptation of two ancient immune proteins into a new dimeric pore-forming toxin in snails.</title>
        <authorList>
            <person name="Giglio M.L."/>
            <person name="Ituarte S."/>
            <person name="Milesi V."/>
            <person name="Dreon M.S."/>
            <person name="Brola T.R."/>
            <person name="Caramelo J."/>
            <person name="Ip J.C.H."/>
            <person name="Mate S."/>
            <person name="Qiu J.W."/>
            <person name="Otero L.H."/>
            <person name="Heras H."/>
        </authorList>
    </citation>
    <scope>FUNCTION</scope>
    <scope>TOXIC DOSE</scope>
    <scope>SUBCELLULAR LOCATION</scope>
    <scope>SUBUNIT</scope>
    <scope>DISULFIDE BOND</scope>
    <scope>3D-STRUCTURE MODELING</scope>
</reference>
<evidence type="ECO:0000250" key="1">
    <source>
        <dbReference type="UniProtKB" id="P0C8G6"/>
    </source>
</evidence>
<evidence type="ECO:0000250" key="2">
    <source>
        <dbReference type="UniProtKB" id="P0C8G7"/>
    </source>
</evidence>
<evidence type="ECO:0000255" key="3"/>
<evidence type="ECO:0000269" key="4">
    <source>
    </source>
</evidence>
<evidence type="ECO:0000269" key="5">
    <source>
    </source>
</evidence>
<evidence type="ECO:0000303" key="6">
    <source>
    </source>
</evidence>
<evidence type="ECO:0000303" key="7">
    <source>
    </source>
</evidence>
<evidence type="ECO:0000303" key="8">
    <source>
    </source>
</evidence>
<evidence type="ECO:0000305" key="9"/>
<evidence type="ECO:0000305" key="10">
    <source>
    </source>
</evidence>
<evidence type="ECO:0000305" key="11">
    <source>
    </source>
</evidence>
<sequence>MVKKIHFVMERHASIVAFLLAVLALTESQAFTSVKLPRDEHWPYNYVSVGPAGVWAVNRQNKLFYRTGTYGDNANMGSGWQFKQDGVGQVDVGKDKVGYINLSGGSLFRIEGISQANPVGGTPKSWEWWTKYIGMSLREDTRFSSRIENQNKVLTFTFRTCFWASRITNWCFADSSYTETVTAGGSGTWITKSQLKYKSGTFGNPDTEGGDWILVDSGSFQHVSSGSGVVLAVRSNGELVQRTGITCSLPQGTGWTSMLNSMSRVDTYGTVAWAVDTAGDLYFINL</sequence>
<name>PV22_POMMA</name>